<accession>P85903</accession>
<comment type="function">
    <text evidence="4">This protein binds RuBisCO small and large subunits and is implicated in the assembly of the enzyme oligomer.</text>
</comment>
<comment type="subunit">
    <text evidence="4">Oligomer of probably six alpha and six beta subunits.</text>
</comment>
<comment type="subcellular location">
    <subcellularLocation>
        <location evidence="4">Plastid</location>
        <location evidence="4">Chloroplast</location>
    </subcellularLocation>
</comment>
<comment type="miscellaneous">
    <text evidence="4">This protein shows ATPase activity.</text>
</comment>
<comment type="similarity">
    <text evidence="2">Belongs to the chaperonin (HSP60) family.</text>
</comment>
<protein>
    <recommendedName>
        <fullName evidence="1">RuBisCO large subunit-binding protein subunit alpha, chloroplastic</fullName>
    </recommendedName>
    <alternativeName>
        <fullName evidence="1">60 kDa chaperonin subunit alpha</fullName>
    </alternativeName>
    <alternativeName>
        <fullName evidence="1">CPN-60 alpha</fullName>
    </alternativeName>
</protein>
<dbReference type="GO" id="GO:0009507">
    <property type="term" value="C:chloroplast"/>
    <property type="evidence" value="ECO:0007669"/>
    <property type="project" value="UniProtKB-SubCell"/>
</dbReference>
<dbReference type="GO" id="GO:0005524">
    <property type="term" value="F:ATP binding"/>
    <property type="evidence" value="ECO:0007669"/>
    <property type="project" value="UniProtKB-KW"/>
</dbReference>
<reference key="1">
    <citation type="journal article" date="2008" name="J. Proteomics">
        <title>A proteomics approach to identify proteins differentially expressed in Douglas-fir seedlings infected by Phellinus sulphurascens.</title>
        <authorList>
            <person name="Islam M.A."/>
            <person name="Sturrock R.N."/>
            <person name="Ekramoddoullah A.K.M."/>
        </authorList>
    </citation>
    <scope>IDENTIFICATION BY MASS SPECTROMETRY</scope>
</reference>
<organism>
    <name type="scientific">Pseudotsuga menziesii</name>
    <name type="common">Douglas-fir</name>
    <name type="synonym">Abies menziesii</name>
    <dbReference type="NCBI Taxonomy" id="3357"/>
    <lineage>
        <taxon>Eukaryota</taxon>
        <taxon>Viridiplantae</taxon>
        <taxon>Streptophyta</taxon>
        <taxon>Embryophyta</taxon>
        <taxon>Tracheophyta</taxon>
        <taxon>Spermatophyta</taxon>
        <taxon>Pinopsida</taxon>
        <taxon>Pinidae</taxon>
        <taxon>Conifers I</taxon>
        <taxon>Pinales</taxon>
        <taxon>Pinaceae</taxon>
        <taxon>Pseudotsuga</taxon>
    </lineage>
</organism>
<feature type="chain" id="PRO_0000392517" description="RuBisCO large subunit-binding protein subunit alpha, chloroplastic">
    <location>
        <begin position="1" status="less than"/>
        <end position="17" status="greater than"/>
    </location>
</feature>
<feature type="non-terminal residue" evidence="3">
    <location>
        <position position="1"/>
    </location>
</feature>
<feature type="non-terminal residue" evidence="3">
    <location>
        <position position="17"/>
    </location>
</feature>
<name>RUBA_PSEMZ</name>
<evidence type="ECO:0000250" key="1">
    <source>
        <dbReference type="UniProtKB" id="P21238"/>
    </source>
</evidence>
<evidence type="ECO:0000255" key="2"/>
<evidence type="ECO:0000303" key="3">
    <source>
    </source>
</evidence>
<evidence type="ECO:0000305" key="4"/>
<proteinExistence type="evidence at protein level"/>
<keyword id="KW-0067">ATP-binding</keyword>
<keyword id="KW-0143">Chaperone</keyword>
<keyword id="KW-0150">Chloroplast</keyword>
<keyword id="KW-0547">Nucleotide-binding</keyword>
<keyword id="KW-0934">Plastid</keyword>
<sequence length="17" mass="1637">TNDSAGDGTTTASVLAR</sequence>